<reference key="1">
    <citation type="journal article" date="2009" name="Genome Res.">
        <title>Newly introduced genomic prophage islands are critical determinants of in vivo competitiveness in the Liverpool epidemic strain of Pseudomonas aeruginosa.</title>
        <authorList>
            <person name="Winstanley C."/>
            <person name="Langille M.G.I."/>
            <person name="Fothergill J.L."/>
            <person name="Kukavica-Ibrulj I."/>
            <person name="Paradis-Bleau C."/>
            <person name="Sanschagrin F."/>
            <person name="Thomson N.R."/>
            <person name="Winsor G.L."/>
            <person name="Quail M.A."/>
            <person name="Lennard N."/>
            <person name="Bignell A."/>
            <person name="Clarke L."/>
            <person name="Seeger K."/>
            <person name="Saunders D."/>
            <person name="Harris D."/>
            <person name="Parkhill J."/>
            <person name="Hancock R.E.W."/>
            <person name="Brinkman F.S.L."/>
            <person name="Levesque R.C."/>
        </authorList>
    </citation>
    <scope>NUCLEOTIDE SEQUENCE [LARGE SCALE GENOMIC DNA]</scope>
    <source>
        <strain>LESB58</strain>
    </source>
</reference>
<protein>
    <recommendedName>
        <fullName evidence="1">Urease subunit gamma</fullName>
        <ecNumber evidence="1">3.5.1.5</ecNumber>
    </recommendedName>
    <alternativeName>
        <fullName evidence="1">Urea amidohydrolase subunit gamma</fullName>
    </alternativeName>
</protein>
<sequence length="100" mass="10983">MDLSPREKDKLLIFTAGLLAERRLARGLKLNYPEAVALISAALLEGARDGRSVAELMHYGTTLLNREQVMEGVPEMIPDIQVEATFPDGTKLVTVHQPIA</sequence>
<dbReference type="EC" id="3.5.1.5" evidence="1"/>
<dbReference type="EMBL" id="FM209186">
    <property type="protein sequence ID" value="CAW30005.1"/>
    <property type="molecule type" value="Genomic_DNA"/>
</dbReference>
<dbReference type="RefSeq" id="WP_003099389.1">
    <property type="nucleotide sequence ID" value="NC_011770.1"/>
</dbReference>
<dbReference type="SMR" id="B7V1S8"/>
<dbReference type="KEGG" id="pag:PLES_52511"/>
<dbReference type="HOGENOM" id="CLU_145825_1_0_6"/>
<dbReference type="UniPathway" id="UPA00258">
    <property type="reaction ID" value="UER00370"/>
</dbReference>
<dbReference type="GO" id="GO:0005737">
    <property type="term" value="C:cytoplasm"/>
    <property type="evidence" value="ECO:0007669"/>
    <property type="project" value="UniProtKB-SubCell"/>
</dbReference>
<dbReference type="GO" id="GO:0016151">
    <property type="term" value="F:nickel cation binding"/>
    <property type="evidence" value="ECO:0007669"/>
    <property type="project" value="InterPro"/>
</dbReference>
<dbReference type="GO" id="GO:0009039">
    <property type="term" value="F:urease activity"/>
    <property type="evidence" value="ECO:0007669"/>
    <property type="project" value="UniProtKB-UniRule"/>
</dbReference>
<dbReference type="GO" id="GO:0043419">
    <property type="term" value="P:urea catabolic process"/>
    <property type="evidence" value="ECO:0007669"/>
    <property type="project" value="UniProtKB-UniRule"/>
</dbReference>
<dbReference type="CDD" id="cd00390">
    <property type="entry name" value="Urease_gamma"/>
    <property type="match status" value="1"/>
</dbReference>
<dbReference type="Gene3D" id="3.30.280.10">
    <property type="entry name" value="Urease, gamma-like subunit"/>
    <property type="match status" value="1"/>
</dbReference>
<dbReference type="HAMAP" id="MF_00739">
    <property type="entry name" value="Urease_gamma"/>
    <property type="match status" value="1"/>
</dbReference>
<dbReference type="InterPro" id="IPR012010">
    <property type="entry name" value="Urease_gamma"/>
</dbReference>
<dbReference type="InterPro" id="IPR002026">
    <property type="entry name" value="Urease_gamma/gamma-beta_su"/>
</dbReference>
<dbReference type="InterPro" id="IPR036463">
    <property type="entry name" value="Urease_gamma_sf"/>
</dbReference>
<dbReference type="InterPro" id="IPR050069">
    <property type="entry name" value="Urease_subunit"/>
</dbReference>
<dbReference type="NCBIfam" id="NF009712">
    <property type="entry name" value="PRK13241.1"/>
    <property type="match status" value="1"/>
</dbReference>
<dbReference type="NCBIfam" id="TIGR00193">
    <property type="entry name" value="urease_gam"/>
    <property type="match status" value="1"/>
</dbReference>
<dbReference type="PANTHER" id="PTHR33569">
    <property type="entry name" value="UREASE"/>
    <property type="match status" value="1"/>
</dbReference>
<dbReference type="PANTHER" id="PTHR33569:SF1">
    <property type="entry name" value="UREASE"/>
    <property type="match status" value="1"/>
</dbReference>
<dbReference type="Pfam" id="PF00547">
    <property type="entry name" value="Urease_gamma"/>
    <property type="match status" value="1"/>
</dbReference>
<dbReference type="PIRSF" id="PIRSF001223">
    <property type="entry name" value="Urease_gamma"/>
    <property type="match status" value="1"/>
</dbReference>
<dbReference type="SUPFAM" id="SSF54111">
    <property type="entry name" value="Urease, gamma-subunit"/>
    <property type="match status" value="1"/>
</dbReference>
<accession>B7V1S8</accession>
<evidence type="ECO:0000255" key="1">
    <source>
        <dbReference type="HAMAP-Rule" id="MF_00739"/>
    </source>
</evidence>
<feature type="chain" id="PRO_1000199875" description="Urease subunit gamma">
    <location>
        <begin position="1"/>
        <end position="100"/>
    </location>
</feature>
<organism>
    <name type="scientific">Pseudomonas aeruginosa (strain LESB58)</name>
    <dbReference type="NCBI Taxonomy" id="557722"/>
    <lineage>
        <taxon>Bacteria</taxon>
        <taxon>Pseudomonadati</taxon>
        <taxon>Pseudomonadota</taxon>
        <taxon>Gammaproteobacteria</taxon>
        <taxon>Pseudomonadales</taxon>
        <taxon>Pseudomonadaceae</taxon>
        <taxon>Pseudomonas</taxon>
    </lineage>
</organism>
<name>URE3_PSEA8</name>
<comment type="catalytic activity">
    <reaction evidence="1">
        <text>urea + 2 H2O + H(+) = hydrogencarbonate + 2 NH4(+)</text>
        <dbReference type="Rhea" id="RHEA:20557"/>
        <dbReference type="ChEBI" id="CHEBI:15377"/>
        <dbReference type="ChEBI" id="CHEBI:15378"/>
        <dbReference type="ChEBI" id="CHEBI:16199"/>
        <dbReference type="ChEBI" id="CHEBI:17544"/>
        <dbReference type="ChEBI" id="CHEBI:28938"/>
        <dbReference type="EC" id="3.5.1.5"/>
    </reaction>
</comment>
<comment type="pathway">
    <text evidence="1">Nitrogen metabolism; urea degradation; CO(2) and NH(3) from urea (urease route): step 1/1.</text>
</comment>
<comment type="subunit">
    <text evidence="1">Heterotrimer of UreA (gamma), UreB (beta) and UreC (alpha) subunits. Three heterotrimers associate to form the active enzyme.</text>
</comment>
<comment type="subcellular location">
    <subcellularLocation>
        <location evidence="1">Cytoplasm</location>
    </subcellularLocation>
</comment>
<comment type="similarity">
    <text evidence="1">Belongs to the urease gamma subunit family.</text>
</comment>
<proteinExistence type="inferred from homology"/>
<keyword id="KW-0963">Cytoplasm</keyword>
<keyword id="KW-0378">Hydrolase</keyword>
<gene>
    <name evidence="1" type="primary">ureA</name>
    <name type="ordered locus">PLES_52511</name>
</gene>